<gene>
    <name evidence="1" type="primary">DQD1</name>
    <name type="ORF">CTRG_01731</name>
</gene>
<proteinExistence type="inferred from homology"/>
<evidence type="ECO:0000255" key="1">
    <source>
        <dbReference type="HAMAP-Rule" id="MF_03136"/>
    </source>
</evidence>
<name>3DHQ_CANTT</name>
<keyword id="KW-0456">Lyase</keyword>
<keyword id="KW-0672">Quinate metabolism</keyword>
<keyword id="KW-1185">Reference proteome</keyword>
<sequence length="146" mass="16161">MVKKVLLINGPNLNLLGTREPEKYGTTSLSDIEKAAIEQAQLKKNDSEVLTYQNNTEGFIIDRIHEARRQGVGFIVINAGAYTHTSVGIRDALLGTAIPFIEVHITNVHQREPFRHQSYLSDKAVAVICGLGVYGYTAAIEYALNY</sequence>
<protein>
    <recommendedName>
        <fullName evidence="1">Catabolic 3-dehydroquinase</fullName>
        <shortName evidence="1">cDHQase</shortName>
        <ecNumber evidence="1">4.2.1.10</ecNumber>
    </recommendedName>
    <alternativeName>
        <fullName evidence="1">3-dehydroquinate dehydratase</fullName>
    </alternativeName>
</protein>
<dbReference type="EC" id="4.2.1.10" evidence="1"/>
<dbReference type="EMBL" id="GG692396">
    <property type="protein sequence ID" value="EER34869.1"/>
    <property type="molecule type" value="Genomic_DNA"/>
</dbReference>
<dbReference type="RefSeq" id="XP_002547424.1">
    <property type="nucleotide sequence ID" value="XM_002547378.1"/>
</dbReference>
<dbReference type="SMR" id="C5M799"/>
<dbReference type="STRING" id="294747.C5M799"/>
<dbReference type="EnsemblFungi" id="CTRG_01731-t43_1">
    <property type="protein sequence ID" value="CTRG_01731-t43_1-p1"/>
    <property type="gene ID" value="CTRG_01731"/>
</dbReference>
<dbReference type="GeneID" id="8301550"/>
<dbReference type="KEGG" id="ctp:CTRG_01731"/>
<dbReference type="VEuPathDB" id="FungiDB:CTRG_01731"/>
<dbReference type="eggNOG" id="ENOG502S1A9">
    <property type="taxonomic scope" value="Eukaryota"/>
</dbReference>
<dbReference type="HOGENOM" id="CLU_090968_1_0_1"/>
<dbReference type="OrthoDB" id="8191625at2759"/>
<dbReference type="UniPathway" id="UPA00088">
    <property type="reaction ID" value="UER00178"/>
</dbReference>
<dbReference type="Proteomes" id="UP000002037">
    <property type="component" value="Unassembled WGS sequence"/>
</dbReference>
<dbReference type="GO" id="GO:0003855">
    <property type="term" value="F:3-dehydroquinate dehydratase activity"/>
    <property type="evidence" value="ECO:0007669"/>
    <property type="project" value="UniProtKB-UniRule"/>
</dbReference>
<dbReference type="GO" id="GO:0046279">
    <property type="term" value="P:3,4-dihydroxybenzoate biosynthetic process"/>
    <property type="evidence" value="ECO:0007669"/>
    <property type="project" value="UniProtKB-UniRule"/>
</dbReference>
<dbReference type="GO" id="GO:0019631">
    <property type="term" value="P:quinate catabolic process"/>
    <property type="evidence" value="ECO:0007669"/>
    <property type="project" value="TreeGrafter"/>
</dbReference>
<dbReference type="CDD" id="cd00466">
    <property type="entry name" value="DHQase_II"/>
    <property type="match status" value="1"/>
</dbReference>
<dbReference type="Gene3D" id="3.40.50.9100">
    <property type="entry name" value="Dehydroquinase, class II"/>
    <property type="match status" value="1"/>
</dbReference>
<dbReference type="HAMAP" id="MF_00169">
    <property type="entry name" value="AroQ"/>
    <property type="match status" value="1"/>
</dbReference>
<dbReference type="InterPro" id="IPR001874">
    <property type="entry name" value="DHquinase_II"/>
</dbReference>
<dbReference type="InterPro" id="IPR018509">
    <property type="entry name" value="DHquinase_II_CS"/>
</dbReference>
<dbReference type="InterPro" id="IPR036441">
    <property type="entry name" value="DHquinase_II_sf"/>
</dbReference>
<dbReference type="NCBIfam" id="TIGR01088">
    <property type="entry name" value="aroQ"/>
    <property type="match status" value="1"/>
</dbReference>
<dbReference type="NCBIfam" id="NF003804">
    <property type="entry name" value="PRK05395.1-1"/>
    <property type="match status" value="1"/>
</dbReference>
<dbReference type="NCBIfam" id="NF003805">
    <property type="entry name" value="PRK05395.1-2"/>
    <property type="match status" value="1"/>
</dbReference>
<dbReference type="NCBIfam" id="NF003806">
    <property type="entry name" value="PRK05395.1-3"/>
    <property type="match status" value="1"/>
</dbReference>
<dbReference type="NCBIfam" id="NF003807">
    <property type="entry name" value="PRK05395.1-4"/>
    <property type="match status" value="1"/>
</dbReference>
<dbReference type="PANTHER" id="PTHR21272">
    <property type="entry name" value="CATABOLIC 3-DEHYDROQUINASE"/>
    <property type="match status" value="1"/>
</dbReference>
<dbReference type="PANTHER" id="PTHR21272:SF3">
    <property type="entry name" value="CATABOLIC 3-DEHYDROQUINASE"/>
    <property type="match status" value="1"/>
</dbReference>
<dbReference type="Pfam" id="PF01220">
    <property type="entry name" value="DHquinase_II"/>
    <property type="match status" value="1"/>
</dbReference>
<dbReference type="PIRSF" id="PIRSF001399">
    <property type="entry name" value="DHquinase_II"/>
    <property type="match status" value="1"/>
</dbReference>
<dbReference type="SUPFAM" id="SSF52304">
    <property type="entry name" value="Type II 3-dehydroquinate dehydratase"/>
    <property type="match status" value="1"/>
</dbReference>
<dbReference type="PROSITE" id="PS01029">
    <property type="entry name" value="DEHYDROQUINASE_II"/>
    <property type="match status" value="1"/>
</dbReference>
<organism>
    <name type="scientific">Candida tropicalis (strain ATCC MYA-3404 / T1)</name>
    <name type="common">Yeast</name>
    <dbReference type="NCBI Taxonomy" id="294747"/>
    <lineage>
        <taxon>Eukaryota</taxon>
        <taxon>Fungi</taxon>
        <taxon>Dikarya</taxon>
        <taxon>Ascomycota</taxon>
        <taxon>Saccharomycotina</taxon>
        <taxon>Pichiomycetes</taxon>
        <taxon>Debaryomycetaceae</taxon>
        <taxon>Candida/Lodderomyces clade</taxon>
        <taxon>Candida</taxon>
    </lineage>
</organism>
<feature type="chain" id="PRO_0000402363" description="Catabolic 3-dehydroquinase">
    <location>
        <begin position="1"/>
        <end position="146"/>
    </location>
</feature>
<feature type="active site" description="Proton acceptor" evidence="1">
    <location>
        <position position="24"/>
    </location>
</feature>
<feature type="active site" description="Proton donor" evidence="1">
    <location>
        <position position="104"/>
    </location>
</feature>
<feature type="binding site" evidence="1">
    <location>
        <position position="78"/>
    </location>
    <ligand>
        <name>substrate</name>
    </ligand>
</feature>
<feature type="binding site" evidence="1">
    <location>
        <position position="84"/>
    </location>
    <ligand>
        <name>substrate</name>
    </ligand>
</feature>
<feature type="binding site" evidence="1">
    <location>
        <position position="91"/>
    </location>
    <ligand>
        <name>substrate</name>
    </ligand>
</feature>
<feature type="binding site" evidence="1">
    <location>
        <begin position="105"/>
        <end position="106"/>
    </location>
    <ligand>
        <name>substrate</name>
    </ligand>
</feature>
<feature type="binding site" evidence="1">
    <location>
        <position position="115"/>
    </location>
    <ligand>
        <name>substrate</name>
    </ligand>
</feature>
<feature type="site" description="Transition state stabilizer" evidence="1">
    <location>
        <position position="19"/>
    </location>
</feature>
<accession>C5M799</accession>
<comment type="function">
    <text evidence="1">Is involved in the catabolism of quinate. Allows the utilization of quinate as carbon source via the beta-ketoadipate pathway.</text>
</comment>
<comment type="catalytic activity">
    <reaction evidence="1">
        <text>3-dehydroquinate = 3-dehydroshikimate + H2O</text>
        <dbReference type="Rhea" id="RHEA:21096"/>
        <dbReference type="ChEBI" id="CHEBI:15377"/>
        <dbReference type="ChEBI" id="CHEBI:16630"/>
        <dbReference type="ChEBI" id="CHEBI:32364"/>
        <dbReference type="EC" id="4.2.1.10"/>
    </reaction>
</comment>
<comment type="pathway">
    <text evidence="1">Aromatic compound metabolism; 3,4-dihydroxybenzoate biosynthesis; 3,4-dihydroxybenzoate from 3-dehydroquinate: step 1/2.</text>
</comment>
<comment type="subunit">
    <text evidence="1">Homododecamer. Adopts a ring-like structure, composed of an arrangement of two hexameric rings stacked on top of one another.</text>
</comment>
<comment type="similarity">
    <text evidence="1">Belongs to the type-II 3-dehydroquinase family.</text>
</comment>
<reference key="1">
    <citation type="journal article" date="2009" name="Nature">
        <title>Evolution of pathogenicity and sexual reproduction in eight Candida genomes.</title>
        <authorList>
            <person name="Butler G."/>
            <person name="Rasmussen M.D."/>
            <person name="Lin M.F."/>
            <person name="Santos M.A.S."/>
            <person name="Sakthikumar S."/>
            <person name="Munro C.A."/>
            <person name="Rheinbay E."/>
            <person name="Grabherr M."/>
            <person name="Forche A."/>
            <person name="Reedy J.L."/>
            <person name="Agrafioti I."/>
            <person name="Arnaud M.B."/>
            <person name="Bates S."/>
            <person name="Brown A.J.P."/>
            <person name="Brunke S."/>
            <person name="Costanzo M.C."/>
            <person name="Fitzpatrick D.A."/>
            <person name="de Groot P.W.J."/>
            <person name="Harris D."/>
            <person name="Hoyer L.L."/>
            <person name="Hube B."/>
            <person name="Klis F.M."/>
            <person name="Kodira C."/>
            <person name="Lennard N."/>
            <person name="Logue M.E."/>
            <person name="Martin R."/>
            <person name="Neiman A.M."/>
            <person name="Nikolaou E."/>
            <person name="Quail M.A."/>
            <person name="Quinn J."/>
            <person name="Santos M.C."/>
            <person name="Schmitzberger F.F."/>
            <person name="Sherlock G."/>
            <person name="Shah P."/>
            <person name="Silverstein K.A.T."/>
            <person name="Skrzypek M.S."/>
            <person name="Soll D."/>
            <person name="Staggs R."/>
            <person name="Stansfield I."/>
            <person name="Stumpf M.P.H."/>
            <person name="Sudbery P.E."/>
            <person name="Srikantha T."/>
            <person name="Zeng Q."/>
            <person name="Berman J."/>
            <person name="Berriman M."/>
            <person name="Heitman J."/>
            <person name="Gow N.A.R."/>
            <person name="Lorenz M.C."/>
            <person name="Birren B.W."/>
            <person name="Kellis M."/>
            <person name="Cuomo C.A."/>
        </authorList>
    </citation>
    <scope>NUCLEOTIDE SEQUENCE [LARGE SCALE GENOMIC DNA]</scope>
    <source>
        <strain>ATCC MYA-3404 / T1</strain>
    </source>
</reference>